<organism>
    <name type="scientific">Limosilactobacillus reuteri subsp. reuteri (strain JCM 1112)</name>
    <name type="common">Lactobacillus reuteri</name>
    <dbReference type="NCBI Taxonomy" id="557433"/>
    <lineage>
        <taxon>Bacteria</taxon>
        <taxon>Bacillati</taxon>
        <taxon>Bacillota</taxon>
        <taxon>Bacilli</taxon>
        <taxon>Lactobacillales</taxon>
        <taxon>Lactobacillaceae</taxon>
        <taxon>Limosilactobacillus</taxon>
    </lineage>
</organism>
<sequence>MPKMKSNRAAAKRFKRTANGGFKSGNSFTSHRFHGKTKKQRRQLRGLSMMDKTNVKRYKKLLPFK</sequence>
<evidence type="ECO:0000255" key="1">
    <source>
        <dbReference type="HAMAP-Rule" id="MF_00514"/>
    </source>
</evidence>
<evidence type="ECO:0000256" key="2">
    <source>
        <dbReference type="SAM" id="MobiDB-lite"/>
    </source>
</evidence>
<evidence type="ECO:0000305" key="3"/>
<keyword id="KW-0687">Ribonucleoprotein</keyword>
<keyword id="KW-0689">Ribosomal protein</keyword>
<dbReference type="EMBL" id="AP007281">
    <property type="protein sequence ID" value="BAG25690.1"/>
    <property type="molecule type" value="Genomic_DNA"/>
</dbReference>
<dbReference type="RefSeq" id="WP_003664106.1">
    <property type="nucleotide sequence ID" value="NC_010609.1"/>
</dbReference>
<dbReference type="SMR" id="B2G8A8"/>
<dbReference type="GeneID" id="77191910"/>
<dbReference type="KEGG" id="lrf:LAR_1174"/>
<dbReference type="HOGENOM" id="CLU_169643_3_1_9"/>
<dbReference type="GO" id="GO:0022625">
    <property type="term" value="C:cytosolic large ribosomal subunit"/>
    <property type="evidence" value="ECO:0007669"/>
    <property type="project" value="TreeGrafter"/>
</dbReference>
<dbReference type="GO" id="GO:0003735">
    <property type="term" value="F:structural constituent of ribosome"/>
    <property type="evidence" value="ECO:0007669"/>
    <property type="project" value="InterPro"/>
</dbReference>
<dbReference type="GO" id="GO:0006412">
    <property type="term" value="P:translation"/>
    <property type="evidence" value="ECO:0007669"/>
    <property type="project" value="UniProtKB-UniRule"/>
</dbReference>
<dbReference type="FunFam" id="4.10.410.60:FF:000001">
    <property type="entry name" value="50S ribosomal protein L35"/>
    <property type="match status" value="1"/>
</dbReference>
<dbReference type="Gene3D" id="4.10.410.60">
    <property type="match status" value="1"/>
</dbReference>
<dbReference type="HAMAP" id="MF_00514">
    <property type="entry name" value="Ribosomal_bL35"/>
    <property type="match status" value="1"/>
</dbReference>
<dbReference type="InterPro" id="IPR001706">
    <property type="entry name" value="Ribosomal_bL35"/>
</dbReference>
<dbReference type="InterPro" id="IPR021137">
    <property type="entry name" value="Ribosomal_bL35-like"/>
</dbReference>
<dbReference type="InterPro" id="IPR018265">
    <property type="entry name" value="Ribosomal_bL35_CS"/>
</dbReference>
<dbReference type="InterPro" id="IPR037229">
    <property type="entry name" value="Ribosomal_bL35_sf"/>
</dbReference>
<dbReference type="NCBIfam" id="TIGR00001">
    <property type="entry name" value="rpmI_bact"/>
    <property type="match status" value="1"/>
</dbReference>
<dbReference type="PANTHER" id="PTHR33343">
    <property type="entry name" value="54S RIBOSOMAL PROTEIN BL35M"/>
    <property type="match status" value="1"/>
</dbReference>
<dbReference type="PANTHER" id="PTHR33343:SF1">
    <property type="entry name" value="LARGE RIBOSOMAL SUBUNIT PROTEIN BL35M"/>
    <property type="match status" value="1"/>
</dbReference>
<dbReference type="Pfam" id="PF01632">
    <property type="entry name" value="Ribosomal_L35p"/>
    <property type="match status" value="1"/>
</dbReference>
<dbReference type="PRINTS" id="PR00064">
    <property type="entry name" value="RIBOSOMALL35"/>
</dbReference>
<dbReference type="SUPFAM" id="SSF143034">
    <property type="entry name" value="L35p-like"/>
    <property type="match status" value="1"/>
</dbReference>
<dbReference type="PROSITE" id="PS00936">
    <property type="entry name" value="RIBOSOMAL_L35"/>
    <property type="match status" value="1"/>
</dbReference>
<gene>
    <name evidence="1" type="primary">rpmI</name>
    <name type="ordered locus">LAR_1174</name>
</gene>
<proteinExistence type="inferred from homology"/>
<reference key="1">
    <citation type="journal article" date="2008" name="DNA Res.">
        <title>Comparative genome analysis of Lactobacillus reuteri and Lactobacillus fermentum reveal a genomic island for reuterin and cobalamin production.</title>
        <authorList>
            <person name="Morita H."/>
            <person name="Toh H."/>
            <person name="Fukuda S."/>
            <person name="Horikawa H."/>
            <person name="Oshima K."/>
            <person name="Suzuki T."/>
            <person name="Murakami M."/>
            <person name="Hisamatsu S."/>
            <person name="Kato Y."/>
            <person name="Takizawa T."/>
            <person name="Fukuoka H."/>
            <person name="Yoshimura T."/>
            <person name="Itoh K."/>
            <person name="O'Sullivan D.J."/>
            <person name="McKay L.L."/>
            <person name="Ohno H."/>
            <person name="Kikuchi J."/>
            <person name="Masaoka T."/>
            <person name="Hattori M."/>
        </authorList>
    </citation>
    <scope>NUCLEOTIDE SEQUENCE [LARGE SCALE GENOMIC DNA]</scope>
    <source>
        <strain>JCM 1112</strain>
    </source>
</reference>
<name>RL35_LIMRJ</name>
<protein>
    <recommendedName>
        <fullName evidence="1">Large ribosomal subunit protein bL35</fullName>
    </recommendedName>
    <alternativeName>
        <fullName evidence="3">50S ribosomal protein L35</fullName>
    </alternativeName>
</protein>
<feature type="chain" id="PRO_1000127368" description="Large ribosomal subunit protein bL35">
    <location>
        <begin position="1"/>
        <end position="65"/>
    </location>
</feature>
<feature type="region of interest" description="Disordered" evidence="2">
    <location>
        <begin position="1"/>
        <end position="52"/>
    </location>
</feature>
<feature type="compositionally biased region" description="Basic residues" evidence="2">
    <location>
        <begin position="31"/>
        <end position="44"/>
    </location>
</feature>
<comment type="similarity">
    <text evidence="1">Belongs to the bacterial ribosomal protein bL35 family.</text>
</comment>
<accession>B2G8A8</accession>